<evidence type="ECO:0000255" key="1"/>
<evidence type="ECO:0000305" key="2"/>
<gene>
    <name type="ordered locus">MJ1362</name>
</gene>
<dbReference type="EMBL" id="L77117">
    <property type="protein sequence ID" value="AAB99370.1"/>
    <property type="molecule type" value="Genomic_DNA"/>
</dbReference>
<dbReference type="PIR" id="A64470">
    <property type="entry name" value="A64470"/>
</dbReference>
<dbReference type="RefSeq" id="WP_010870879.1">
    <property type="nucleotide sequence ID" value="NC_000909.1"/>
</dbReference>
<dbReference type="SMR" id="Q58757"/>
<dbReference type="FunCoup" id="Q58757">
    <property type="interactions" value="4"/>
</dbReference>
<dbReference type="STRING" id="243232.MJ_1362"/>
<dbReference type="PaxDb" id="243232-MJ_1362"/>
<dbReference type="EnsemblBacteria" id="AAB99370">
    <property type="protein sequence ID" value="AAB99370"/>
    <property type="gene ID" value="MJ_1362"/>
</dbReference>
<dbReference type="GeneID" id="1452264"/>
<dbReference type="KEGG" id="mja:MJ_1362"/>
<dbReference type="eggNOG" id="arCOG01545">
    <property type="taxonomic scope" value="Archaea"/>
</dbReference>
<dbReference type="HOGENOM" id="CLU_830576_0_0_2"/>
<dbReference type="InParanoid" id="Q58757"/>
<dbReference type="OrthoDB" id="15253at2157"/>
<dbReference type="PhylomeDB" id="Q58757"/>
<dbReference type="Proteomes" id="UP000000805">
    <property type="component" value="Chromosome"/>
</dbReference>
<dbReference type="GO" id="GO:0009326">
    <property type="term" value="C:formate dehydrogenase complex"/>
    <property type="evidence" value="ECO:0000318"/>
    <property type="project" value="GO_Central"/>
</dbReference>
<dbReference type="GO" id="GO:0005886">
    <property type="term" value="C:plasma membrane"/>
    <property type="evidence" value="ECO:0000318"/>
    <property type="project" value="GO_Central"/>
</dbReference>
<dbReference type="GO" id="GO:0019645">
    <property type="term" value="P:anaerobic electron transport chain"/>
    <property type="evidence" value="ECO:0000318"/>
    <property type="project" value="GO_Central"/>
</dbReference>
<dbReference type="InterPro" id="IPR052561">
    <property type="entry name" value="ComplexI_Subunit1"/>
</dbReference>
<dbReference type="InterPro" id="IPR001694">
    <property type="entry name" value="NADH_UbQ_OxRdtase_su1/FPO"/>
</dbReference>
<dbReference type="PANTHER" id="PTHR43359">
    <property type="entry name" value="FORMATE HYDROGENLYASE SUBUNIT 4"/>
    <property type="match status" value="1"/>
</dbReference>
<dbReference type="PANTHER" id="PTHR43359:SF1">
    <property type="entry name" value="FORMATE HYDROGENLYASE SUBUNIT 4-RELATED"/>
    <property type="match status" value="1"/>
</dbReference>
<dbReference type="Pfam" id="PF00146">
    <property type="entry name" value="NADHdh"/>
    <property type="match status" value="2"/>
</dbReference>
<keyword id="KW-1003">Cell membrane</keyword>
<keyword id="KW-0472">Membrane</keyword>
<keyword id="KW-1185">Reference proteome</keyword>
<keyword id="KW-0812">Transmembrane</keyword>
<keyword id="KW-1133">Transmembrane helix</keyword>
<name>Y1362_METJA</name>
<organism>
    <name type="scientific">Methanocaldococcus jannaschii (strain ATCC 43067 / DSM 2661 / JAL-1 / JCM 10045 / NBRC 100440)</name>
    <name type="common">Methanococcus jannaschii</name>
    <dbReference type="NCBI Taxonomy" id="243232"/>
    <lineage>
        <taxon>Archaea</taxon>
        <taxon>Methanobacteriati</taxon>
        <taxon>Methanobacteriota</taxon>
        <taxon>Methanomada group</taxon>
        <taxon>Methanococci</taxon>
        <taxon>Methanococcales</taxon>
        <taxon>Methanocaldococcaceae</taxon>
        <taxon>Methanocaldococcus</taxon>
    </lineage>
</organism>
<reference key="1">
    <citation type="journal article" date="1996" name="Science">
        <title>Complete genome sequence of the methanogenic archaeon, Methanococcus jannaschii.</title>
        <authorList>
            <person name="Bult C.J."/>
            <person name="White O."/>
            <person name="Olsen G.J."/>
            <person name="Zhou L."/>
            <person name="Fleischmann R.D."/>
            <person name="Sutton G.G."/>
            <person name="Blake J.A."/>
            <person name="FitzGerald L.M."/>
            <person name="Clayton R.A."/>
            <person name="Gocayne J.D."/>
            <person name="Kerlavage A.R."/>
            <person name="Dougherty B.A."/>
            <person name="Tomb J.-F."/>
            <person name="Adams M.D."/>
            <person name="Reich C.I."/>
            <person name="Overbeek R."/>
            <person name="Kirkness E.F."/>
            <person name="Weinstock K.G."/>
            <person name="Merrick J.M."/>
            <person name="Glodek A."/>
            <person name="Scott J.L."/>
            <person name="Geoghagen N.S.M."/>
            <person name="Weidman J.F."/>
            <person name="Fuhrmann J.L."/>
            <person name="Nguyen D."/>
            <person name="Utterback T.R."/>
            <person name="Kelley J.M."/>
            <person name="Peterson J.D."/>
            <person name="Sadow P.W."/>
            <person name="Hanna M.C."/>
            <person name="Cotton M.D."/>
            <person name="Roberts K.M."/>
            <person name="Hurst M.A."/>
            <person name="Kaine B.P."/>
            <person name="Borodovsky M."/>
            <person name="Klenk H.-P."/>
            <person name="Fraser C.M."/>
            <person name="Smith H.O."/>
            <person name="Woese C.R."/>
            <person name="Venter J.C."/>
        </authorList>
    </citation>
    <scope>NUCLEOTIDE SEQUENCE [LARGE SCALE GENOMIC DNA]</scope>
    <source>
        <strain>ATCC 43067 / DSM 2661 / JAL-1 / JCM 10045 / NBRC 100440</strain>
    </source>
</reference>
<sequence length="322" mass="35835">MIDELISIIGIPALAFAISTYIPGIQRKIEARIQQRIGPSILAPGFWAFFKFLFKETKAPDANLPKLYNLLPLLSIVVLWALLSITSLTSFHILSNEIGIVGLLKLEEMMYVILGSLAFSIMGWKMPFIDECKGTPFIKTLKLSLEQLGAVRSFKMITIGSFPFYLATFLPFVQKKSIFLKDIVGEPFLFSLAGIFGAACYFIGYVIMIKEYPFSITHTKADVIEGPTMELIAKYRALYLASKELLLIALGSLFATLYLGIAPDIENPITIVENFAIALIFPILATFVRAFSPVLLFKQIYPISYVATLIGVIGFIFALLGW</sequence>
<proteinExistence type="predicted"/>
<comment type="subcellular location">
    <subcellularLocation>
        <location evidence="2">Cell membrane</location>
        <topology evidence="2">Multi-pass membrane protein</topology>
    </subcellularLocation>
</comment>
<protein>
    <recommendedName>
        <fullName>Uncharacterized protein MJ1362</fullName>
    </recommendedName>
</protein>
<accession>Q58757</accession>
<feature type="chain" id="PRO_0000107299" description="Uncharacterized protein MJ1362">
    <location>
        <begin position="1"/>
        <end position="322"/>
    </location>
</feature>
<feature type="transmembrane region" description="Helical" evidence="1">
    <location>
        <begin position="5"/>
        <end position="25"/>
    </location>
</feature>
<feature type="transmembrane region" description="Helical" evidence="1">
    <location>
        <begin position="37"/>
        <end position="57"/>
    </location>
</feature>
<feature type="transmembrane region" description="Helical" evidence="1">
    <location>
        <begin position="71"/>
        <end position="91"/>
    </location>
</feature>
<feature type="transmembrane region" description="Helical" evidence="1">
    <location>
        <begin position="109"/>
        <end position="129"/>
    </location>
</feature>
<feature type="transmembrane region" description="Helical" evidence="1">
    <location>
        <begin position="153"/>
        <end position="173"/>
    </location>
</feature>
<feature type="transmembrane region" description="Helical" evidence="1">
    <location>
        <begin position="189"/>
        <end position="209"/>
    </location>
</feature>
<feature type="transmembrane region" description="Helical" evidence="1">
    <location>
        <begin position="245"/>
        <end position="265"/>
    </location>
</feature>
<feature type="transmembrane region" description="Helical" evidence="1">
    <location>
        <begin position="268"/>
        <end position="288"/>
    </location>
</feature>
<feature type="transmembrane region" description="Helical" evidence="1">
    <location>
        <begin position="300"/>
        <end position="320"/>
    </location>
</feature>